<name>SYP_CLOTE</name>
<organism>
    <name type="scientific">Clostridium tetani (strain Massachusetts / E88)</name>
    <dbReference type="NCBI Taxonomy" id="212717"/>
    <lineage>
        <taxon>Bacteria</taxon>
        <taxon>Bacillati</taxon>
        <taxon>Bacillota</taxon>
        <taxon>Clostridia</taxon>
        <taxon>Eubacteriales</taxon>
        <taxon>Clostridiaceae</taxon>
        <taxon>Clostridium</taxon>
    </lineage>
</organism>
<feature type="chain" id="PRO_0000248674" description="Proline--tRNA ligase">
    <location>
        <begin position="1"/>
        <end position="570"/>
    </location>
</feature>
<protein>
    <recommendedName>
        <fullName evidence="1">Proline--tRNA ligase</fullName>
        <ecNumber evidence="1">6.1.1.15</ecNumber>
    </recommendedName>
    <alternativeName>
        <fullName evidence="1">Prolyl-tRNA synthetase</fullName>
        <shortName evidence="1">ProRS</shortName>
    </alternativeName>
</protein>
<accession>Q890M2</accession>
<reference key="1">
    <citation type="journal article" date="2003" name="Proc. Natl. Acad. Sci. U.S.A.">
        <title>The genome sequence of Clostridium tetani, the causative agent of tetanus disease.</title>
        <authorList>
            <person name="Brueggemann H."/>
            <person name="Baeumer S."/>
            <person name="Fricke W.F."/>
            <person name="Wiezer A."/>
            <person name="Liesegang H."/>
            <person name="Decker I."/>
            <person name="Herzberg C."/>
            <person name="Martinez-Arias R."/>
            <person name="Merkl R."/>
            <person name="Henne A."/>
            <person name="Gottschalk G."/>
        </authorList>
    </citation>
    <scope>NUCLEOTIDE SEQUENCE [LARGE SCALE GENOMIC DNA]</scope>
    <source>
        <strain>Massachusetts / E88</strain>
    </source>
</reference>
<dbReference type="EC" id="6.1.1.15" evidence="1"/>
<dbReference type="EMBL" id="AE015927">
    <property type="protein sequence ID" value="AAO37075.1"/>
    <property type="molecule type" value="Genomic_DNA"/>
</dbReference>
<dbReference type="RefSeq" id="WP_011100735.1">
    <property type="nucleotide sequence ID" value="NC_004557.1"/>
</dbReference>
<dbReference type="SMR" id="Q890M2"/>
<dbReference type="STRING" id="212717.CTC_02625"/>
<dbReference type="GeneID" id="24254077"/>
<dbReference type="KEGG" id="ctc:CTC_02625"/>
<dbReference type="HOGENOM" id="CLU_016739_0_0_9"/>
<dbReference type="OrthoDB" id="9809052at2"/>
<dbReference type="Proteomes" id="UP000001412">
    <property type="component" value="Chromosome"/>
</dbReference>
<dbReference type="GO" id="GO:0005829">
    <property type="term" value="C:cytosol"/>
    <property type="evidence" value="ECO:0007669"/>
    <property type="project" value="TreeGrafter"/>
</dbReference>
<dbReference type="GO" id="GO:0002161">
    <property type="term" value="F:aminoacyl-tRNA deacylase activity"/>
    <property type="evidence" value="ECO:0007669"/>
    <property type="project" value="InterPro"/>
</dbReference>
<dbReference type="GO" id="GO:0005524">
    <property type="term" value="F:ATP binding"/>
    <property type="evidence" value="ECO:0007669"/>
    <property type="project" value="UniProtKB-UniRule"/>
</dbReference>
<dbReference type="GO" id="GO:0140096">
    <property type="term" value="F:catalytic activity, acting on a protein"/>
    <property type="evidence" value="ECO:0007669"/>
    <property type="project" value="UniProtKB-ARBA"/>
</dbReference>
<dbReference type="GO" id="GO:0004827">
    <property type="term" value="F:proline-tRNA ligase activity"/>
    <property type="evidence" value="ECO:0007669"/>
    <property type="project" value="UniProtKB-UniRule"/>
</dbReference>
<dbReference type="GO" id="GO:0016740">
    <property type="term" value="F:transferase activity"/>
    <property type="evidence" value="ECO:0007669"/>
    <property type="project" value="UniProtKB-ARBA"/>
</dbReference>
<dbReference type="GO" id="GO:0006433">
    <property type="term" value="P:prolyl-tRNA aminoacylation"/>
    <property type="evidence" value="ECO:0007669"/>
    <property type="project" value="UniProtKB-UniRule"/>
</dbReference>
<dbReference type="CDD" id="cd04334">
    <property type="entry name" value="ProRS-INS"/>
    <property type="match status" value="1"/>
</dbReference>
<dbReference type="CDD" id="cd00861">
    <property type="entry name" value="ProRS_anticodon_short"/>
    <property type="match status" value="1"/>
</dbReference>
<dbReference type="CDD" id="cd00779">
    <property type="entry name" value="ProRS_core_prok"/>
    <property type="match status" value="1"/>
</dbReference>
<dbReference type="FunFam" id="3.30.930.10:FF:000066">
    <property type="entry name" value="Proline--tRNA ligase"/>
    <property type="match status" value="1"/>
</dbReference>
<dbReference type="FunFam" id="3.40.50.800:FF:000011">
    <property type="entry name" value="Proline--tRNA ligase"/>
    <property type="match status" value="1"/>
</dbReference>
<dbReference type="Gene3D" id="3.40.50.800">
    <property type="entry name" value="Anticodon-binding domain"/>
    <property type="match status" value="1"/>
</dbReference>
<dbReference type="Gene3D" id="3.30.930.10">
    <property type="entry name" value="Bira Bifunctional Protein, Domain 2"/>
    <property type="match status" value="2"/>
</dbReference>
<dbReference type="HAMAP" id="MF_01569">
    <property type="entry name" value="Pro_tRNA_synth_type1"/>
    <property type="match status" value="1"/>
</dbReference>
<dbReference type="InterPro" id="IPR002314">
    <property type="entry name" value="aa-tRNA-synt_IIb"/>
</dbReference>
<dbReference type="InterPro" id="IPR006195">
    <property type="entry name" value="aa-tRNA-synth_II"/>
</dbReference>
<dbReference type="InterPro" id="IPR045864">
    <property type="entry name" value="aa-tRNA-synth_II/BPL/LPL"/>
</dbReference>
<dbReference type="InterPro" id="IPR004154">
    <property type="entry name" value="Anticodon-bd"/>
</dbReference>
<dbReference type="InterPro" id="IPR036621">
    <property type="entry name" value="Anticodon-bd_dom_sf"/>
</dbReference>
<dbReference type="InterPro" id="IPR002316">
    <property type="entry name" value="Pro-tRNA-ligase_IIa"/>
</dbReference>
<dbReference type="InterPro" id="IPR004500">
    <property type="entry name" value="Pro-tRNA-synth_IIa_bac-type"/>
</dbReference>
<dbReference type="InterPro" id="IPR023717">
    <property type="entry name" value="Pro-tRNA-Synthase_IIa_type1"/>
</dbReference>
<dbReference type="InterPro" id="IPR050062">
    <property type="entry name" value="Pro-tRNA_synthetase"/>
</dbReference>
<dbReference type="InterPro" id="IPR044140">
    <property type="entry name" value="ProRS_anticodon_short"/>
</dbReference>
<dbReference type="InterPro" id="IPR033730">
    <property type="entry name" value="ProRS_core_prok"/>
</dbReference>
<dbReference type="InterPro" id="IPR036754">
    <property type="entry name" value="YbaK/aa-tRNA-synt-asso_dom_sf"/>
</dbReference>
<dbReference type="InterPro" id="IPR007214">
    <property type="entry name" value="YbaK/aa-tRNA-synth-assoc-dom"/>
</dbReference>
<dbReference type="NCBIfam" id="NF006625">
    <property type="entry name" value="PRK09194.1"/>
    <property type="match status" value="1"/>
</dbReference>
<dbReference type="NCBIfam" id="TIGR00409">
    <property type="entry name" value="proS_fam_II"/>
    <property type="match status" value="1"/>
</dbReference>
<dbReference type="PANTHER" id="PTHR42753">
    <property type="entry name" value="MITOCHONDRIAL RIBOSOME PROTEIN L39/PROLYL-TRNA LIGASE FAMILY MEMBER"/>
    <property type="match status" value="1"/>
</dbReference>
<dbReference type="PANTHER" id="PTHR42753:SF2">
    <property type="entry name" value="PROLINE--TRNA LIGASE"/>
    <property type="match status" value="1"/>
</dbReference>
<dbReference type="Pfam" id="PF03129">
    <property type="entry name" value="HGTP_anticodon"/>
    <property type="match status" value="1"/>
</dbReference>
<dbReference type="Pfam" id="PF00587">
    <property type="entry name" value="tRNA-synt_2b"/>
    <property type="match status" value="1"/>
</dbReference>
<dbReference type="Pfam" id="PF04073">
    <property type="entry name" value="tRNA_edit"/>
    <property type="match status" value="1"/>
</dbReference>
<dbReference type="PIRSF" id="PIRSF001535">
    <property type="entry name" value="ProRS_1"/>
    <property type="match status" value="1"/>
</dbReference>
<dbReference type="PRINTS" id="PR01046">
    <property type="entry name" value="TRNASYNTHPRO"/>
</dbReference>
<dbReference type="SUPFAM" id="SSF52954">
    <property type="entry name" value="Class II aaRS ABD-related"/>
    <property type="match status" value="1"/>
</dbReference>
<dbReference type="SUPFAM" id="SSF55681">
    <property type="entry name" value="Class II aaRS and biotin synthetases"/>
    <property type="match status" value="1"/>
</dbReference>
<dbReference type="SUPFAM" id="SSF55826">
    <property type="entry name" value="YbaK/ProRS associated domain"/>
    <property type="match status" value="1"/>
</dbReference>
<dbReference type="PROSITE" id="PS50862">
    <property type="entry name" value="AA_TRNA_LIGASE_II"/>
    <property type="match status" value="1"/>
</dbReference>
<evidence type="ECO:0000255" key="1">
    <source>
        <dbReference type="HAMAP-Rule" id="MF_01569"/>
    </source>
</evidence>
<comment type="function">
    <text evidence="1">Catalyzes the attachment of proline to tRNA(Pro) in a two-step reaction: proline is first activated by ATP to form Pro-AMP and then transferred to the acceptor end of tRNA(Pro). As ProRS can inadvertently accommodate and process non-cognate amino acids such as alanine and cysteine, to avoid such errors it has two additional distinct editing activities against alanine. One activity is designated as 'pretransfer' editing and involves the tRNA(Pro)-independent hydrolysis of activated Ala-AMP. The other activity is designated 'posttransfer' editing and involves deacylation of mischarged Ala-tRNA(Pro). The misacylated Cys-tRNA(Pro) is not edited by ProRS.</text>
</comment>
<comment type="catalytic activity">
    <reaction evidence="1">
        <text>tRNA(Pro) + L-proline + ATP = L-prolyl-tRNA(Pro) + AMP + diphosphate</text>
        <dbReference type="Rhea" id="RHEA:14305"/>
        <dbReference type="Rhea" id="RHEA-COMP:9700"/>
        <dbReference type="Rhea" id="RHEA-COMP:9702"/>
        <dbReference type="ChEBI" id="CHEBI:30616"/>
        <dbReference type="ChEBI" id="CHEBI:33019"/>
        <dbReference type="ChEBI" id="CHEBI:60039"/>
        <dbReference type="ChEBI" id="CHEBI:78442"/>
        <dbReference type="ChEBI" id="CHEBI:78532"/>
        <dbReference type="ChEBI" id="CHEBI:456215"/>
        <dbReference type="EC" id="6.1.1.15"/>
    </reaction>
</comment>
<comment type="subunit">
    <text evidence="1">Homodimer.</text>
</comment>
<comment type="subcellular location">
    <subcellularLocation>
        <location evidence="1">Cytoplasm</location>
    </subcellularLocation>
</comment>
<comment type="domain">
    <text evidence="1">Consists of three domains: the N-terminal catalytic domain, the editing domain and the C-terminal anticodon-binding domain.</text>
</comment>
<comment type="similarity">
    <text evidence="1">Belongs to the class-II aminoacyl-tRNA synthetase family. ProS type 1 subfamily.</text>
</comment>
<keyword id="KW-0030">Aminoacyl-tRNA synthetase</keyword>
<keyword id="KW-0067">ATP-binding</keyword>
<keyword id="KW-0963">Cytoplasm</keyword>
<keyword id="KW-0436">Ligase</keyword>
<keyword id="KW-0547">Nucleotide-binding</keyword>
<keyword id="KW-0648">Protein biosynthesis</keyword>
<keyword id="KW-1185">Reference proteome</keyword>
<gene>
    <name evidence="1" type="primary">proS</name>
    <name type="ordered locus">CTC_02625</name>
</gene>
<proteinExistence type="inferred from homology"/>
<sequence length="570" mass="64490">MKLSNMLVSTLREVPAEAEIPSHKLMLRAGMMRKMASGVYNFMPFGLRVIKKIEDIVREEMDNAGAQEFLASALLPSELWKESGRWDVFGPEMFRLQDRNNREFCLGPTHEEVFTDIARNEINSYKQLPLNLYQIQTKYRDERRPRFGLMRSREFIMKDAYSFDKDYEDLDVSYKKMYEAYHNIFIRCGLECNCVEADSGAMGGAGSAEFMVKSEVGEDEIAFCDSCGYGANIEKAPAISEKFDQEELKELAKIETPNVKTIDQLIKFLEINPAKLVKTLIYKVDDKVVAVAIRGDREANEIKIINALGGAVNFEMADEETIKKATNSEVGFAGPIGIKVDCLLIDEEVTNMYNFIIGANETGYHYKNANYKRDFEGIVGDYRKVIQGDKCPLCGGNIEIARGIEVGHIFKLGTKYSESMGANFLDEKGESRPLVMGCYGIGVSRTMAAAIEQNHDENGIVWPLSIAPYHVIVVPVITKDEEQMKAAEEIYNKLKSMGVEVLLDDRAERPGVKFKDADLIGIPIRVTVGKKIKEGKVEYKLRKEEDLEILNIEQVYDKVREEFEKSSLKL</sequence>